<comment type="function">
    <text>Could be involved in the transport of substrates.</text>
</comment>
<comment type="subcellular location">
    <subcellularLocation>
        <location>Cell outer membrane</location>
    </subcellularLocation>
</comment>
<comment type="similarity">
    <text evidence="2">Belongs to the OmpW/AlkL family.</text>
</comment>
<geneLocation type="plasmid">
    <name>OCT</name>
</geneLocation>
<keyword id="KW-0002">3D-structure</keyword>
<keyword id="KW-0998">Cell outer membrane</keyword>
<keyword id="KW-0472">Membrane</keyword>
<keyword id="KW-0614">Plasmid</keyword>
<keyword id="KW-0732">Signal</keyword>
<keyword id="KW-0812">Transmembrane</keyword>
<keyword id="KW-1134">Transmembrane beta strand</keyword>
<accession>Q00595</accession>
<sequence length="230" mass="24992">MSFSNYKVIAMPVLVANFVLGAATAWANENYPAKSAGYNQGDWVASFNFSKVYVGEELGDLNVGGGALPNADVSIGNDTTLTFDIAYFVSSNIAVDFFVGVPARAKFQGEKSISSLGRVSEVDYGPAILSLQYHYDSFERLYPYVGVGVGRVLFFDKTDGALSSFDIKDKWAPAFQVGLRYDLGNSWMLNSDVRYIPFKTDVTGTLGPVPVSTKIEVDPFILSLGASYVF</sequence>
<gene>
    <name type="primary">alkL</name>
</gene>
<feature type="signal peptide" evidence="1">
    <location>
        <begin position="1"/>
        <end position="27"/>
    </location>
</feature>
<feature type="chain" id="PRO_0000020195" description="Outer membrane protein AlkL">
    <location>
        <begin position="28"/>
        <end position="230"/>
    </location>
</feature>
<feature type="strand" evidence="3">
    <location>
        <begin position="40"/>
        <end position="53"/>
    </location>
</feature>
<feature type="turn" evidence="3">
    <location>
        <begin position="56"/>
        <end position="58"/>
    </location>
</feature>
<feature type="strand" evidence="4">
    <location>
        <begin position="72"/>
        <end position="74"/>
    </location>
</feature>
<feature type="strand" evidence="3">
    <location>
        <begin position="80"/>
        <end position="88"/>
    </location>
</feature>
<feature type="strand" evidence="3">
    <location>
        <begin position="94"/>
        <end position="99"/>
    </location>
</feature>
<feature type="strand" evidence="4">
    <location>
        <begin position="104"/>
        <end position="111"/>
    </location>
</feature>
<feature type="helix" evidence="4">
    <location>
        <begin position="112"/>
        <end position="116"/>
    </location>
</feature>
<feature type="strand" evidence="3">
    <location>
        <begin position="127"/>
        <end position="133"/>
    </location>
</feature>
<feature type="strand" evidence="3">
    <location>
        <begin position="138"/>
        <end position="151"/>
    </location>
</feature>
<feature type="strand" evidence="3">
    <location>
        <begin position="158"/>
        <end position="161"/>
    </location>
</feature>
<feature type="strand" evidence="4">
    <location>
        <begin position="165"/>
        <end position="168"/>
    </location>
</feature>
<feature type="strand" evidence="3">
    <location>
        <begin position="171"/>
        <end position="181"/>
    </location>
</feature>
<feature type="strand" evidence="3">
    <location>
        <begin position="184"/>
        <end position="195"/>
    </location>
</feature>
<feature type="strand" evidence="4">
    <location>
        <begin position="198"/>
        <end position="203"/>
    </location>
</feature>
<feature type="strand" evidence="4">
    <location>
        <begin position="206"/>
        <end position="208"/>
    </location>
</feature>
<feature type="strand" evidence="4">
    <location>
        <begin position="213"/>
        <end position="217"/>
    </location>
</feature>
<feature type="strand" evidence="3">
    <location>
        <begin position="220"/>
        <end position="230"/>
    </location>
</feature>
<reference key="1">
    <citation type="journal article" date="1992" name="Mol. Microbiol.">
        <title>DNA sequence determination and functional characterization of the OCT-plasmid-encoded alkJKL genes of Pseudomonas oleovorans.</title>
        <authorList>
            <person name="van Beilen J.B."/>
            <person name="Eggink G."/>
            <person name="Enequist H."/>
            <person name="Bos R."/>
            <person name="Witholt B."/>
        </authorList>
    </citation>
    <scope>NUCLEOTIDE SEQUENCE [GENOMIC DNA]</scope>
    <source>
        <strain>GPo1</strain>
    </source>
</reference>
<evidence type="ECO:0000255" key="1"/>
<evidence type="ECO:0000305" key="2"/>
<evidence type="ECO:0007829" key="3">
    <source>
        <dbReference type="PDB" id="6QAM"/>
    </source>
</evidence>
<evidence type="ECO:0007829" key="4">
    <source>
        <dbReference type="PDB" id="6QWR"/>
    </source>
</evidence>
<protein>
    <recommendedName>
        <fullName>Outer membrane protein AlkL</fullName>
    </recommendedName>
</protein>
<organism>
    <name type="scientific">Ectopseudomonas oleovorans</name>
    <name type="common">Pseudomonas oleovorans</name>
    <dbReference type="NCBI Taxonomy" id="301"/>
    <lineage>
        <taxon>Bacteria</taxon>
        <taxon>Pseudomonadati</taxon>
        <taxon>Pseudomonadota</taxon>
        <taxon>Gammaproteobacteria</taxon>
        <taxon>Pseudomonadales</taxon>
        <taxon>Pseudomonadaceae</taxon>
        <taxon>Ectopseudomonas</taxon>
    </lineage>
</organism>
<dbReference type="EMBL" id="AJ245436">
    <property type="protein sequence ID" value="CAB54056.1"/>
    <property type="molecule type" value="Genomic_DNA"/>
</dbReference>
<dbReference type="PIR" id="S27996">
    <property type="entry name" value="S27996"/>
</dbReference>
<dbReference type="PDB" id="6QAM">
    <property type="method" value="NMR"/>
    <property type="chains" value="A=28-230"/>
</dbReference>
<dbReference type="PDB" id="6QWR">
    <property type="method" value="NMR"/>
    <property type="chains" value="A=28-230"/>
</dbReference>
<dbReference type="PDBsum" id="6QAM"/>
<dbReference type="PDBsum" id="6QWR"/>
<dbReference type="BMRB" id="Q00595"/>
<dbReference type="SMR" id="Q00595"/>
<dbReference type="TCDB" id="1.B.39.1.2">
    <property type="family name" value="the bacterial porin, ompw (ompw) family"/>
</dbReference>
<dbReference type="GO" id="GO:0009279">
    <property type="term" value="C:cell outer membrane"/>
    <property type="evidence" value="ECO:0007669"/>
    <property type="project" value="UniProtKB-SubCell"/>
</dbReference>
<dbReference type="GO" id="GO:0055085">
    <property type="term" value="P:transmembrane transport"/>
    <property type="evidence" value="ECO:0007669"/>
    <property type="project" value="TreeGrafter"/>
</dbReference>
<dbReference type="Gene3D" id="2.40.160.20">
    <property type="match status" value="1"/>
</dbReference>
<dbReference type="InterPro" id="IPR011250">
    <property type="entry name" value="OMP/PagP_b-brl"/>
</dbReference>
<dbReference type="InterPro" id="IPR005618">
    <property type="entry name" value="OMPW"/>
</dbReference>
<dbReference type="PANTHER" id="PTHR36920">
    <property type="match status" value="1"/>
</dbReference>
<dbReference type="PANTHER" id="PTHR36920:SF1">
    <property type="entry name" value="OUTER MEMBRANE PROTEIN W"/>
    <property type="match status" value="1"/>
</dbReference>
<dbReference type="Pfam" id="PF03922">
    <property type="entry name" value="OmpW"/>
    <property type="match status" value="1"/>
</dbReference>
<dbReference type="SUPFAM" id="SSF56925">
    <property type="entry name" value="OMPA-like"/>
    <property type="match status" value="1"/>
</dbReference>
<name>ALKL_ECTOL</name>
<proteinExistence type="evidence at protein level"/>